<keyword id="KW-0165">Cleavage on pair of basic residues</keyword>
<keyword id="KW-0180">Complement pathway</keyword>
<keyword id="KW-0903">Direct protein sequencing</keyword>
<keyword id="KW-1015">Disulfide bond</keyword>
<keyword id="KW-0325">Glycoprotein</keyword>
<keyword id="KW-0391">Immunity</keyword>
<keyword id="KW-0395">Inflammatory response</keyword>
<keyword id="KW-0399">Innate immunity</keyword>
<keyword id="KW-0597">Phosphoprotein</keyword>
<keyword id="KW-1185">Reference proteome</keyword>
<keyword id="KW-0964">Secreted</keyword>
<keyword id="KW-0732">Signal</keyword>
<keyword id="KW-0765">Sulfation</keyword>
<keyword id="KW-0882">Thioester bond</keyword>
<comment type="function">
    <text evidence="1">Precursor of non-enzymatic components of the classical, lectin and GZMK complement pathways, which consist in a cascade of proteins that leads to phagocytosis and breakdown of pathogens and signaling that strengthens the adaptive immune system.</text>
</comment>
<comment type="function">
    <molecule>Complement C4b</molecule>
    <text evidence="1">Non-enzymatic component of C3 and C5 convertases. Generated following cleavage by complement proteases (C1S, MASP2 or GZMK, depending on the complement pathway), it covalently attaches to the surface of pathogens, where it acts as an opsonin that marks the surface of antigens for removal. It then recruits the serine protease complement C2b to form the C3 and C5 convertases, which cleave and activate C3 and C5, respectively, the next components of the complement pathways. Complement C4b-A isotype is responsible for effective binding to form amide bonds with immune aggregates or protein antigens, while complement C4b-B isotype catalyzes the transacylation of the thioester carbonyl group to form ester bonds with carbohydrate antigens.</text>
</comment>
<comment type="function">
    <molecule>C4a anaphylatoxin</molecule>
    <text evidence="1">Putative humoral mediator released following cleavage by complement proteases (C1S, MASP2 or GZMK, depending on the complement pathway). While it is strongly similar to anaphylatoxins, its role is unclear. Was reported to act as a mediator of local inflammatory process; however these effects were probably due to contamination with C3a and/C5a anaphylatoxins in biological assays.</text>
</comment>
<comment type="subunit">
    <text evidence="1">In absence of complement activation, circulates in blood as a disulfide-linked trimer of an alpha, beta and gamma chain.</text>
</comment>
<comment type="subunit">
    <molecule>Complement C4b</molecule>
    <text evidence="1">Complement C4b is composed of complement C4b-A, complement C4 beta and complement C4 gamma chains that are associated via disulfide bonds. Non-enzymatic component of the C3 convertase, also named C4bC2b, composed of the serine protease complement C2b (C2), as well as complement C4b. Non-enzymatic component of the C5 convertase, also named C4bC2bC3b, composed of the serine protease complement C2b (C2), complement C3b, as well as complement C4b.</text>
</comment>
<comment type="subcellular location">
    <subcellularLocation>
        <location evidence="1">Secreted</location>
    </subcellularLocation>
</comment>
<comment type="subcellular location">
    <molecule>C4a anaphylatoxin</molecule>
    <subcellularLocation>
        <location evidence="5 7">Secreted</location>
    </subcellularLocation>
</comment>
<comment type="subcellular location">
    <molecule>Complement C4b</molecule>
    <subcellularLocation>
        <location evidence="1">Secreted</location>
    </subcellularLocation>
    <subcellularLocation>
        <location evidence="1">Cell surface</location>
    </subcellularLocation>
    <text evidence="1">Covalently associated with the surface of pathogens: the internal thioester bond reacts with carbohydrate antigens on the target surface to form amide or ester bonds.</text>
</comment>
<comment type="induction">
    <text evidence="6">Induced in hepatic stellate cells by iron overload and by gamma-interferon.</text>
</comment>
<comment type="PTM">
    <text evidence="1">Prior to secretion, the single-chain precursor is enzymatically cleaved by plasminogen (PLG) to yield non-identical chains alpha, beta and gamma. During activation of the complement systems, the alpha chain is cleaved into C4a and C4b by different proteases depending on the complement pathway: C4b stays linked to the beta and gamma chains, while C4a is released in the plasma. The alpha chain is cleaved by C1S to generate C4a and C4b following activation by the classical complement system. The alpha chain is cleaved to generate C4a and C4b by MASP2 following activation by the lectin complement system. The alpha chain is cleaved by GZMK to generate C4a and C4b following activation by the GZMK complement system. Further degradation of C4b by C1 into the inactive fragments C4c and C4d blocks the generation of C3 convertase. The proteolytic cleavages often are incomplete so that many structural forms can be found in plasma.</text>
</comment>
<comment type="PTM">
    <molecule>Complement C4b</molecule>
    <text evidence="1">Upon activation, the internal thioester bond reacts with carbohydrate antigens on the target surface to form amide or ester bonds, leading to covalent association with the surface of pathogens.</text>
</comment>
<comment type="PTM">
    <molecule>Complement C4b</molecule>
    <text evidence="1">Complement C4b interacts with complement C3b via a thioester linkage.</text>
</comment>
<comment type="PTM">
    <text evidence="1">N- and O-glycosylated. O-glycosylated with a core 1 or possibly core 8 glycan.</text>
</comment>
<comment type="miscellaneous">
    <text evidence="9">C4 is a major histocompatibility complex class-III protein.</text>
</comment>
<comment type="sequence caution" evidence="9">
    <conflict type="frameshift">
        <sequence resource="EMBL-CDS" id="AAA91231"/>
    </conflict>
</comment>
<reference key="1">
    <citation type="submission" date="2002-09" db="EMBL/GenBank/DDBJ databases">
        <title>Substrate recognition by zymogen and activated forms of mannose-binding protein-associated serine proteases.</title>
        <authorList>
            <person name="Chen C.-B."/>
            <person name="Wallis R."/>
        </authorList>
    </citation>
    <scope>NUCLEOTIDE SEQUENCE [MRNA]</scope>
    <source>
        <strain>Sprague-Dawley</strain>
    </source>
</reference>
<reference key="2">
    <citation type="journal article" date="2002" name="Immunogenetics">
        <title>Physical mapping of the major histocompatibility complex class II and class III regions of the rat.</title>
        <authorList>
            <person name="Walter L."/>
            <person name="Hurt P."/>
            <person name="Himmelbauer H."/>
            <person name="Sudbrak R."/>
            <person name="Guenther E."/>
        </authorList>
    </citation>
    <scope>NUCLEOTIDE SEQUENCE [GENOMIC DNA] OF 1-266</scope>
    <source>
        <strain>Brown Norway</strain>
    </source>
</reference>
<reference key="3">
    <citation type="journal article" date="1996" name="J. Immunol.">
        <title>Complement C4 protein expression by rat hepatic stellate cells.</title>
        <authorList>
            <person name="Fimmel C.J."/>
            <person name="Brown K.E."/>
            <person name="O'Neill R."/>
            <person name="Kladney R.D."/>
        </authorList>
    </citation>
    <scope>NUCLEOTIDE SEQUENCE [MRNA] OF 1656-1737</scope>
    <scope>INDUCTION</scope>
    <source>
        <strain>Sprague-Dawley</strain>
        <tissue>Hepatic stellate cell</tissue>
    </source>
</reference>
<reference key="4">
    <citation type="journal article" date="1985" name="Fed. Proc.">
        <title>Characterization of rat anaphylatoxins C4a and C5a.</title>
        <authorList>
            <person name="Cui L.-X."/>
            <person name="Ferreri K."/>
            <person name="Hugli T.E."/>
        </authorList>
    </citation>
    <scope>PROTEIN SEQUENCE OF 678-753</scope>
    <scope>SUBCELLULAR LOCATION (C4A ANAPHYLATOXIN)</scope>
    <scope>GLYCOSYLATION AT ASN-743</scope>
</reference>
<reference key="5">
    <citation type="journal article" date="1988" name="Mol. Immunol.">
        <title>Structural characterization of the C4a anaphylatoxin from rat.</title>
        <authorList>
            <person name="Cui L.-X."/>
            <person name="Ferreri K."/>
            <person name="Hugli T.E."/>
        </authorList>
    </citation>
    <scope>PROTEIN SEQUENCE OF 678-753</scope>
    <scope>SUBCELLULAR LOCATION (C4A ANAPHYLATOXIN)</scope>
    <scope>GLYCOSYLATION AT ASN-743</scope>
</reference>
<proteinExistence type="evidence at protein level"/>
<dbReference type="EMBL" id="AY149995">
    <property type="protein sequence ID" value="AAN72415.1"/>
    <property type="molecule type" value="mRNA"/>
</dbReference>
<dbReference type="EMBL" id="AY091787">
    <property type="protein sequence ID" value="AAM14719.1"/>
    <property type="molecule type" value="Genomic_DNA"/>
</dbReference>
<dbReference type="EMBL" id="U42719">
    <property type="protein sequence ID" value="AAA91231.1"/>
    <property type="status" value="ALT_FRAME"/>
    <property type="molecule type" value="mRNA"/>
</dbReference>
<dbReference type="PIR" id="JL0036">
    <property type="entry name" value="JL0036"/>
</dbReference>
<dbReference type="RefSeq" id="NP_113692.2">
    <property type="nucleotide sequence ID" value="NM_031504.3"/>
</dbReference>
<dbReference type="SMR" id="P08649"/>
<dbReference type="BioGRID" id="246420">
    <property type="interactions" value="1"/>
</dbReference>
<dbReference type="FunCoup" id="P08649">
    <property type="interactions" value="48"/>
</dbReference>
<dbReference type="IntAct" id="P08649">
    <property type="interactions" value="2"/>
</dbReference>
<dbReference type="MINT" id="P08649"/>
<dbReference type="STRING" id="10116.ENSRNOP00000037902"/>
<dbReference type="MEROPS" id="I39.951"/>
<dbReference type="GlyCosmos" id="P08649">
    <property type="glycosylation" value="5 sites, No reported glycans"/>
</dbReference>
<dbReference type="GlyGen" id="P08649">
    <property type="glycosylation" value="7 sites"/>
</dbReference>
<dbReference type="iPTMnet" id="P08649"/>
<dbReference type="PhosphoSitePlus" id="P08649"/>
<dbReference type="jPOST" id="P08649"/>
<dbReference type="PaxDb" id="10116-ENSRNOP00000037902"/>
<dbReference type="GeneID" id="24233"/>
<dbReference type="KEGG" id="rno:24233"/>
<dbReference type="UCSC" id="RGD:620005">
    <property type="organism name" value="rat"/>
</dbReference>
<dbReference type="AGR" id="RGD:1591983"/>
<dbReference type="AGR" id="RGD:620005"/>
<dbReference type="CTD" id="720"/>
<dbReference type="RGD" id="620005">
    <property type="gene designation" value="C4a"/>
</dbReference>
<dbReference type="eggNOG" id="KOG1366">
    <property type="taxonomic scope" value="Eukaryota"/>
</dbReference>
<dbReference type="InParanoid" id="P08649"/>
<dbReference type="OrthoDB" id="6359008at2759"/>
<dbReference type="PhylomeDB" id="P08649"/>
<dbReference type="Reactome" id="R-RNO-166663">
    <property type="pathway name" value="Initial triggering of complement"/>
</dbReference>
<dbReference type="Reactome" id="R-RNO-174577">
    <property type="pathway name" value="Activation of C3 and C5"/>
</dbReference>
<dbReference type="Reactome" id="R-RNO-381426">
    <property type="pathway name" value="Regulation of Insulin-like Growth Factor (IGF) transport and uptake by Insulin-like Growth Factor Binding Proteins (IGFBPs)"/>
</dbReference>
<dbReference type="Reactome" id="R-RNO-8957275">
    <property type="pathway name" value="Post-translational protein phosphorylation"/>
</dbReference>
<dbReference type="Reactome" id="R-RNO-977606">
    <property type="pathway name" value="Regulation of Complement cascade"/>
</dbReference>
<dbReference type="SABIO-RK" id="P08649"/>
<dbReference type="PRO" id="PR:P08649"/>
<dbReference type="Proteomes" id="UP000002494">
    <property type="component" value="Unplaced"/>
</dbReference>
<dbReference type="GO" id="GO:0030424">
    <property type="term" value="C:axon"/>
    <property type="evidence" value="ECO:0000266"/>
    <property type="project" value="RGD"/>
</dbReference>
<dbReference type="GO" id="GO:0030425">
    <property type="term" value="C:dendrite"/>
    <property type="evidence" value="ECO:0000266"/>
    <property type="project" value="RGD"/>
</dbReference>
<dbReference type="GO" id="GO:0005576">
    <property type="term" value="C:extracellular region"/>
    <property type="evidence" value="ECO:0000314"/>
    <property type="project" value="UniProtKB"/>
</dbReference>
<dbReference type="GO" id="GO:0005615">
    <property type="term" value="C:extracellular space"/>
    <property type="evidence" value="ECO:0000314"/>
    <property type="project" value="RGD"/>
</dbReference>
<dbReference type="GO" id="GO:0043025">
    <property type="term" value="C:neuronal cell body"/>
    <property type="evidence" value="ECO:0000266"/>
    <property type="project" value="RGD"/>
</dbReference>
<dbReference type="GO" id="GO:0045202">
    <property type="term" value="C:synapse"/>
    <property type="evidence" value="ECO:0000266"/>
    <property type="project" value="RGD"/>
</dbReference>
<dbReference type="GO" id="GO:0001849">
    <property type="term" value="F:complement component C1q complex binding"/>
    <property type="evidence" value="ECO:0000266"/>
    <property type="project" value="RGD"/>
</dbReference>
<dbReference type="GO" id="GO:0004866">
    <property type="term" value="F:endopeptidase inhibitor activity"/>
    <property type="evidence" value="ECO:0007669"/>
    <property type="project" value="InterPro"/>
</dbReference>
<dbReference type="GO" id="GO:0006956">
    <property type="term" value="P:complement activation"/>
    <property type="evidence" value="ECO:0000266"/>
    <property type="project" value="RGD"/>
</dbReference>
<dbReference type="GO" id="GO:0006958">
    <property type="term" value="P:complement activation, classical pathway"/>
    <property type="evidence" value="ECO:0007669"/>
    <property type="project" value="UniProtKB-KW"/>
</dbReference>
<dbReference type="GO" id="GO:0006954">
    <property type="term" value="P:inflammatory response"/>
    <property type="evidence" value="ECO:0007669"/>
    <property type="project" value="UniProtKB-KW"/>
</dbReference>
<dbReference type="GO" id="GO:0045087">
    <property type="term" value="P:innate immune response"/>
    <property type="evidence" value="ECO:0007669"/>
    <property type="project" value="UniProtKB-KW"/>
</dbReference>
<dbReference type="GO" id="GO:2000427">
    <property type="term" value="P:positive regulation of apoptotic cell clearance"/>
    <property type="evidence" value="ECO:0000266"/>
    <property type="project" value="RGD"/>
</dbReference>
<dbReference type="CDD" id="cd00017">
    <property type="entry name" value="ANATO"/>
    <property type="match status" value="1"/>
</dbReference>
<dbReference type="CDD" id="cd02896">
    <property type="entry name" value="complement_C3_C4_C5"/>
    <property type="match status" value="1"/>
</dbReference>
<dbReference type="CDD" id="cd03584">
    <property type="entry name" value="NTR_complement_C4"/>
    <property type="match status" value="1"/>
</dbReference>
<dbReference type="FunFam" id="2.60.40.10:FF:000155">
    <property type="entry name" value="complement C3 isoform X1"/>
    <property type="match status" value="1"/>
</dbReference>
<dbReference type="FunFam" id="1.20.91.20:FF:000006">
    <property type="entry name" value="Complement C4"/>
    <property type="match status" value="1"/>
</dbReference>
<dbReference type="FunFam" id="2.60.40.690:FF:000002">
    <property type="entry name" value="Complement C4 isoform-A"/>
    <property type="match status" value="1"/>
</dbReference>
<dbReference type="FunFam" id="1.50.10.20:FF:000010">
    <property type="entry name" value="Complement C4-A"/>
    <property type="match status" value="1"/>
</dbReference>
<dbReference type="FunFam" id="2.20.130.20:FF:000002">
    <property type="entry name" value="Complement C4-A"/>
    <property type="match status" value="1"/>
</dbReference>
<dbReference type="FunFam" id="2.40.50.120:FF:000009">
    <property type="entry name" value="Complement C4-A"/>
    <property type="match status" value="1"/>
</dbReference>
<dbReference type="FunFam" id="2.60.120.1540:FF:000001">
    <property type="entry name" value="Complement C4-A"/>
    <property type="match status" value="1"/>
</dbReference>
<dbReference type="FunFam" id="2.60.40.10:FF:000803">
    <property type="entry name" value="Complement C4-A"/>
    <property type="match status" value="1"/>
</dbReference>
<dbReference type="FunFam" id="2.60.40.1930:FF:000004">
    <property type="entry name" value="Complement C4-A"/>
    <property type="match status" value="1"/>
</dbReference>
<dbReference type="FunFam" id="2.60.40.1930:FF:000007">
    <property type="entry name" value="Complement C4-A"/>
    <property type="match status" value="1"/>
</dbReference>
<dbReference type="FunFam" id="2.60.40.1930:FF:000005">
    <property type="entry name" value="complement C4-A isoform X3"/>
    <property type="match status" value="1"/>
</dbReference>
<dbReference type="FunFam" id="6.20.50.160:FF:000001">
    <property type="entry name" value="Complement component 4"/>
    <property type="match status" value="1"/>
</dbReference>
<dbReference type="FunFam" id="2.60.40.1940:FF:000001">
    <property type="entry name" value="Complement component C3"/>
    <property type="match status" value="1"/>
</dbReference>
<dbReference type="FunFam" id="2.60.120.1540:FF:000006">
    <property type="entry name" value="MHC-linked complement C4"/>
    <property type="match status" value="1"/>
</dbReference>
<dbReference type="Gene3D" id="1.50.10.20">
    <property type="match status" value="1"/>
</dbReference>
<dbReference type="Gene3D" id="2.20.130.20">
    <property type="match status" value="1"/>
</dbReference>
<dbReference type="Gene3D" id="2.40.50.120">
    <property type="match status" value="1"/>
</dbReference>
<dbReference type="Gene3D" id="2.60.120.1540">
    <property type="match status" value="2"/>
</dbReference>
<dbReference type="Gene3D" id="2.60.40.1930">
    <property type="match status" value="3"/>
</dbReference>
<dbReference type="Gene3D" id="2.60.40.1940">
    <property type="match status" value="1"/>
</dbReference>
<dbReference type="Gene3D" id="6.20.50.160">
    <property type="match status" value="1"/>
</dbReference>
<dbReference type="Gene3D" id="2.60.40.690">
    <property type="entry name" value="Alpha-macroglobulin, receptor-binding domain"/>
    <property type="match status" value="1"/>
</dbReference>
<dbReference type="Gene3D" id="1.20.91.20">
    <property type="entry name" value="Anaphylotoxins (complement system)"/>
    <property type="match status" value="1"/>
</dbReference>
<dbReference type="Gene3D" id="2.60.40.10">
    <property type="entry name" value="Immunoglobulins"/>
    <property type="match status" value="2"/>
</dbReference>
<dbReference type="InterPro" id="IPR009048">
    <property type="entry name" value="A-macroglobulin_rcpt-bd"/>
</dbReference>
<dbReference type="InterPro" id="IPR036595">
    <property type="entry name" value="A-macroglobulin_rcpt-bd_sf"/>
</dbReference>
<dbReference type="InterPro" id="IPR050473">
    <property type="entry name" value="A2M/Complement_sys"/>
</dbReference>
<dbReference type="InterPro" id="IPR011625">
    <property type="entry name" value="A2M_N_BRD"/>
</dbReference>
<dbReference type="InterPro" id="IPR047565">
    <property type="entry name" value="Alpha-macroglob_thiol-ester_cl"/>
</dbReference>
<dbReference type="InterPro" id="IPR011626">
    <property type="entry name" value="Alpha-macroglobulin_TED"/>
</dbReference>
<dbReference type="InterPro" id="IPR000020">
    <property type="entry name" value="Anaphylatoxin/fibulin"/>
</dbReference>
<dbReference type="InterPro" id="IPR018081">
    <property type="entry name" value="Anaphylatoxin_comp_syst"/>
</dbReference>
<dbReference type="InterPro" id="IPR001840">
    <property type="entry name" value="Anaphylatoxn_comp_syst_dom"/>
</dbReference>
<dbReference type="InterPro" id="IPR048847">
    <property type="entry name" value="C4_MG1"/>
</dbReference>
<dbReference type="InterPro" id="IPR054587">
    <property type="entry name" value="CO4A-B_CUB_C"/>
</dbReference>
<dbReference type="InterPro" id="IPR013783">
    <property type="entry name" value="Ig-like_fold"/>
</dbReference>
<dbReference type="InterPro" id="IPR001599">
    <property type="entry name" value="Macroglobln_a2"/>
</dbReference>
<dbReference type="InterPro" id="IPR019742">
    <property type="entry name" value="MacrogloblnA2_CS"/>
</dbReference>
<dbReference type="InterPro" id="IPR002890">
    <property type="entry name" value="MG2"/>
</dbReference>
<dbReference type="InterPro" id="IPR041555">
    <property type="entry name" value="MG3"/>
</dbReference>
<dbReference type="InterPro" id="IPR040839">
    <property type="entry name" value="MG4"/>
</dbReference>
<dbReference type="InterPro" id="IPR001134">
    <property type="entry name" value="Netrin_domain"/>
</dbReference>
<dbReference type="InterPro" id="IPR018933">
    <property type="entry name" value="Netrin_module_non-TIMP"/>
</dbReference>
<dbReference type="InterPro" id="IPR008930">
    <property type="entry name" value="Terpenoid_cyclase/PrenylTrfase"/>
</dbReference>
<dbReference type="InterPro" id="IPR008993">
    <property type="entry name" value="TIMP-like_OB-fold"/>
</dbReference>
<dbReference type="PANTHER" id="PTHR11412:SF86">
    <property type="entry name" value="COMPLEMENT C4-A-RELATED"/>
    <property type="match status" value="1"/>
</dbReference>
<dbReference type="PANTHER" id="PTHR11412">
    <property type="entry name" value="MACROGLOBULIN / COMPLEMENT"/>
    <property type="match status" value="1"/>
</dbReference>
<dbReference type="Pfam" id="PF00207">
    <property type="entry name" value="A2M"/>
    <property type="match status" value="1"/>
</dbReference>
<dbReference type="Pfam" id="PF07703">
    <property type="entry name" value="A2M_BRD"/>
    <property type="match status" value="1"/>
</dbReference>
<dbReference type="Pfam" id="PF07677">
    <property type="entry name" value="A2M_recep"/>
    <property type="match status" value="1"/>
</dbReference>
<dbReference type="Pfam" id="PF01821">
    <property type="entry name" value="ANATO"/>
    <property type="match status" value="1"/>
</dbReference>
<dbReference type="Pfam" id="PF21145">
    <property type="entry name" value="C4_MG1"/>
    <property type="match status" value="1"/>
</dbReference>
<dbReference type="Pfam" id="PF22661">
    <property type="entry name" value="CO4A-B_CUB_C"/>
    <property type="match status" value="1"/>
</dbReference>
<dbReference type="Pfam" id="PF01835">
    <property type="entry name" value="MG2"/>
    <property type="match status" value="1"/>
</dbReference>
<dbReference type="Pfam" id="PF17791">
    <property type="entry name" value="MG3"/>
    <property type="match status" value="1"/>
</dbReference>
<dbReference type="Pfam" id="PF17789">
    <property type="entry name" value="MG4"/>
    <property type="match status" value="1"/>
</dbReference>
<dbReference type="Pfam" id="PF01759">
    <property type="entry name" value="NTR"/>
    <property type="match status" value="1"/>
</dbReference>
<dbReference type="Pfam" id="PF07678">
    <property type="entry name" value="TED_complement"/>
    <property type="match status" value="1"/>
</dbReference>
<dbReference type="PRINTS" id="PR00004">
    <property type="entry name" value="ANAPHYLATOXN"/>
</dbReference>
<dbReference type="SMART" id="SM01360">
    <property type="entry name" value="A2M"/>
    <property type="match status" value="1"/>
</dbReference>
<dbReference type="SMART" id="SM01359">
    <property type="entry name" value="A2M_N_2"/>
    <property type="match status" value="1"/>
</dbReference>
<dbReference type="SMART" id="SM01361">
    <property type="entry name" value="A2M_recep"/>
    <property type="match status" value="1"/>
</dbReference>
<dbReference type="SMART" id="SM00104">
    <property type="entry name" value="ANATO"/>
    <property type="match status" value="1"/>
</dbReference>
<dbReference type="SMART" id="SM00643">
    <property type="entry name" value="C345C"/>
    <property type="match status" value="1"/>
</dbReference>
<dbReference type="SMART" id="SM01419">
    <property type="entry name" value="Thiol-ester_cl"/>
    <property type="match status" value="1"/>
</dbReference>
<dbReference type="SUPFAM" id="SSF49410">
    <property type="entry name" value="Alpha-macroglobulin receptor domain"/>
    <property type="match status" value="1"/>
</dbReference>
<dbReference type="SUPFAM" id="SSF47686">
    <property type="entry name" value="Anaphylotoxins (complement system)"/>
    <property type="match status" value="1"/>
</dbReference>
<dbReference type="SUPFAM" id="SSF48239">
    <property type="entry name" value="Terpenoid cyclases/Protein prenyltransferases"/>
    <property type="match status" value="1"/>
</dbReference>
<dbReference type="SUPFAM" id="SSF50242">
    <property type="entry name" value="TIMP-like"/>
    <property type="match status" value="1"/>
</dbReference>
<dbReference type="PROSITE" id="PS00477">
    <property type="entry name" value="ALPHA_2_MACROGLOBULIN"/>
    <property type="match status" value="1"/>
</dbReference>
<dbReference type="PROSITE" id="PS01177">
    <property type="entry name" value="ANAPHYLATOXIN_1"/>
    <property type="match status" value="1"/>
</dbReference>
<dbReference type="PROSITE" id="PS01178">
    <property type="entry name" value="ANAPHYLATOXIN_2"/>
    <property type="match status" value="1"/>
</dbReference>
<dbReference type="PROSITE" id="PS50189">
    <property type="entry name" value="NTR"/>
    <property type="match status" value="1"/>
</dbReference>
<gene>
    <name evidence="8 10" type="primary">C4</name>
    <name type="synonym">C4a</name>
</gene>
<name>CO4_RAT</name>
<evidence type="ECO:0000250" key="1">
    <source>
        <dbReference type="UniProtKB" id="P0C0L4"/>
    </source>
</evidence>
<evidence type="ECO:0000255" key="2"/>
<evidence type="ECO:0000255" key="3">
    <source>
        <dbReference type="PROSITE-ProRule" id="PRU00022"/>
    </source>
</evidence>
<evidence type="ECO:0000255" key="4">
    <source>
        <dbReference type="PROSITE-ProRule" id="PRU00295"/>
    </source>
</evidence>
<evidence type="ECO:0000269" key="5">
    <source>
    </source>
</evidence>
<evidence type="ECO:0000269" key="6">
    <source>
    </source>
</evidence>
<evidence type="ECO:0000269" key="7">
    <source ref="4"/>
</evidence>
<evidence type="ECO:0000303" key="8">
    <source>
    </source>
</evidence>
<evidence type="ECO:0000305" key="9"/>
<evidence type="ECO:0000312" key="10">
    <source>
        <dbReference type="RGD" id="620005"/>
    </source>
</evidence>
<organism>
    <name type="scientific">Rattus norvegicus</name>
    <name type="common">Rat</name>
    <dbReference type="NCBI Taxonomy" id="10116"/>
    <lineage>
        <taxon>Eukaryota</taxon>
        <taxon>Metazoa</taxon>
        <taxon>Chordata</taxon>
        <taxon>Craniata</taxon>
        <taxon>Vertebrata</taxon>
        <taxon>Euteleostomi</taxon>
        <taxon>Mammalia</taxon>
        <taxon>Eutheria</taxon>
        <taxon>Euarchontoglires</taxon>
        <taxon>Glires</taxon>
        <taxon>Rodentia</taxon>
        <taxon>Myomorpha</taxon>
        <taxon>Muroidea</taxon>
        <taxon>Muridae</taxon>
        <taxon>Murinae</taxon>
        <taxon>Rattus</taxon>
    </lineage>
</organism>
<sequence length="1737" mass="192163">MRLLWGLAWAFSFFASSLQKPRLLLFSPSVVNLGTPLSVGVQLLDAPAGQEVKGSVYLRNPTSGPCSPKKDFKLSSGNDFVLLRLEVPLKDVRSCGLFGLRRAPHIQLVAHSPWLKNTASKATETQGVNLLFSSRRGHIFVQTDQPIYNPGQRVRYRVFALDQKMRPSTDTLTVTVENSHGLRVRKKEVFAPTSIFQDDFIIPDISEPGTWKISARFSDGLESNRSTHFEVKKYVLPNFEVKLTPWKPYILTVPSYREEIQLDVQARYVYGKPVQGVAYTRFALMDEQGKKSFLRGLETQTKLVEGQTHISISRDQFQAALGKVNTEIGDLEGLRLYAAVAVIESPGGEMEEAELTSWPFVSSAFSLDLSHTKQHLVPGAPFLLQALVREMSGSEASDVPVKVSATLLSGSDSKVLDFQQNTNGIGQVSFSIHVPPTITELRLLVSAGSLYPAVAKLTVQAPPSRGPGFLSIEPLDLRSPRVGDTFVLSLRTVGIPMPTFSHYYYMIISRGQIMAMSREPRRALTSISVLVDHHLAPSFYFVAYFYHQGLPVANSLLINVQPGDCEGKLELKVDGAKEYRNGDSMKLQLQTDSEALVALGAVDTALYAVGGRSHKPLDMSKVFEVMNSYNLGCGPGGGDDALQVFQTAGLAFSDGDRLTQTKENLSCPKEKKSRQKRNVNFQKAISEKLGQYSSPDTKRCCQDGMTKLPMARTCEQRAARVPQPACREPFLSCCKFAEDLRRNQTRSQAGLARAQDMLQEEDLIDEDDILVRSFFPENWLWRVEPVDRSKLLTVWLPDSLTTWEIHGVSLSKSKGLCVAKPTRVRVFREFHLHLRLPISVRRFEQLELRPVLYNYLSEDVTVSVHVSPVEGLCLAGGGLLAQQVSVPAGSARPVAFSVVPTAAASIPLKVVARGSFTIGDAVSKILQIEKEGAIHREEIVYNLDPLNNLGRSLEIPGSSDPNVIPDGDFSSFVRVTASEPLETLGSEGALSPGGVASLLRLPRGCAEQTMIYLAPTLTASHYLDRTEQWSKLPPETKDHAVDLIQKGHMRIQQFRKKDGSFGAWLHRDSSTWLTAFVLKILSLAQEQIGDSPEKLQETAGWLLGQQLDDGSFHDPCPVIHRGMQGGLVGTDETVALTAFVVIALHHGLAVFQDENSQQLKKRVEASITKANSFLGQKASAGLLGAHASAITAYALTLTKASEDLQNVAHNSLMAMAEETGENLYWGSAIGSQDNVVSSTPAPRNPSEPVPQAPALWIETTAYGLLHLLLREGKGEMADKVATWLTHQGSFQGGFRSTQDTVVTLDALSAYWIASHTTEEKALNVTLSSMGRNGYKSHLLQLNNHQVKGLEEELKFSLGSTINVKVGGNSKGTLKILRTYNVLDMKNTTCQDLRIEVTVTGYVEYTREANEDYEYDYDMPAADDPSVHSQPVTPLQLFEGRRSRRRREAPKAADEQESRVQYTVCIWRNGNLGLSGMAIADITLLSGFQALRADLEKLTSLSDRYVSHFETDGPHVLLYFDSVPTTRECVGFGALQEVAVGLVQPASAVLYDYYSPDHKCSVFYAAPTKSKLLSTLCSADVCQCAEGKCPRQRRSLERGVEDKDGYRMKFACYYPRVEYGFQVKVLREDSRAAFRLFETKITQVLHFTKDAKASIGQTRNFLVRASCRLRLEPSKEYLIMGMDGVTSDLKGDPQYLLDSNTWIEEMPSERLCRSTRQRAACGQLNDFLQEYSSQGCQV</sequence>
<accession>P08649</accession>
<accession>Q62895</accession>
<accession>Q8R403</accession>
<protein>
    <recommendedName>
        <fullName evidence="8">Complement C4</fullName>
    </recommendedName>
    <component>
        <recommendedName>
            <fullName>Complement C4 beta chain</fullName>
        </recommendedName>
    </component>
    <component>
        <recommendedName>
            <fullName>Complement C4 alpha chain</fullName>
        </recommendedName>
    </component>
    <component>
        <recommendedName>
            <fullName>C4a anaphylatoxin</fullName>
        </recommendedName>
    </component>
    <component>
        <recommendedName>
            <fullName>Complement C4b</fullName>
        </recommendedName>
    </component>
    <component>
        <recommendedName>
            <fullName>Complement C4 gamma chain</fullName>
        </recommendedName>
    </component>
</protein>
<feature type="signal peptide" evidence="2">
    <location>
        <begin position="1"/>
        <end position="19"/>
    </location>
</feature>
<feature type="chain" id="PRO_0000005979" description="Complement C4 beta chain" evidence="1">
    <location>
        <begin position="20"/>
        <end position="673"/>
    </location>
</feature>
<feature type="propeptide" id="PRO_0000005980" evidence="1">
    <location>
        <begin position="674"/>
        <end position="677"/>
    </location>
</feature>
<feature type="chain" id="PRO_0000005981" description="Complement C4 alpha chain" evidence="1">
    <location>
        <begin position="678"/>
        <end position="1442"/>
    </location>
</feature>
<feature type="chain" id="PRO_0000005982" description="C4a anaphylatoxin" evidence="5 7">
    <location>
        <begin position="678"/>
        <end position="753"/>
    </location>
</feature>
<feature type="chain" id="PRO_0000462548" description="Complement C4b" evidence="1">
    <location>
        <begin position="754"/>
        <end position="1442"/>
    </location>
</feature>
<feature type="propeptide" id="PRO_0000005983" evidence="1">
    <location>
        <begin position="1443"/>
        <end position="1446"/>
    </location>
</feature>
<feature type="chain" id="PRO_0000005984" description="Complement C4 gamma chain" evidence="1">
    <location>
        <begin position="1447"/>
        <end position="1737"/>
    </location>
</feature>
<feature type="domain" description="Anaphylatoxin-like" evidence="3">
    <location>
        <begin position="700"/>
        <end position="734"/>
    </location>
</feature>
<feature type="domain" description="NTR" evidence="4">
    <location>
        <begin position="1588"/>
        <end position="1735"/>
    </location>
</feature>
<feature type="site" description="Cleavage; by C1S, MASP2 and GZMK" evidence="1">
    <location>
        <begin position="753"/>
        <end position="754"/>
    </location>
</feature>
<feature type="modified residue" description="Sulfotyrosine" evidence="1">
    <location>
        <position position="1412"/>
    </location>
</feature>
<feature type="modified residue" description="Sulfotyrosine" evidence="1">
    <location>
        <position position="1414"/>
    </location>
</feature>
<feature type="modified residue" description="Sulfotyrosine" evidence="1">
    <location>
        <position position="1416"/>
    </location>
</feature>
<feature type="modified residue" description="Sulfotyrosine" evidence="2">
    <location>
        <position position="1676"/>
    </location>
</feature>
<feature type="glycosylation site" description="N-linked (GlcNAc...) asparagine" evidence="2">
    <location>
        <position position="224"/>
    </location>
</feature>
<feature type="glycosylation site" description="N-linked (GlcNAc...) asparagine" evidence="2">
    <location>
        <position position="664"/>
    </location>
</feature>
<feature type="glycosylation site" description="N-linked (GlcNAc...) asparagine" evidence="5 7">
    <location>
        <position position="743"/>
    </location>
</feature>
<feature type="glycosylation site" description="N-linked (GlcNAc...) asparagine" evidence="2">
    <location>
        <position position="1323"/>
    </location>
</feature>
<feature type="glycosylation site" description="N-linked (GlcNAc...) asparagine" evidence="2">
    <location>
        <position position="1386"/>
    </location>
</feature>
<feature type="disulfide bond" evidence="1">
    <location>
        <begin position="66"/>
        <end position="95"/>
    </location>
</feature>
<feature type="disulfide bond" description="Interchain (with C-820)" evidence="1">
    <location>
        <position position="565"/>
    </location>
</feature>
<feature type="disulfide bond" evidence="1">
    <location>
        <begin position="633"/>
        <end position="667"/>
    </location>
</feature>
<feature type="disulfide bond" evidence="1">
    <location>
        <begin position="700"/>
        <end position="726"/>
    </location>
</feature>
<feature type="disulfide bond" evidence="1">
    <location>
        <begin position="701"/>
        <end position="733"/>
    </location>
</feature>
<feature type="disulfide bond" evidence="1">
    <location>
        <begin position="714"/>
        <end position="734"/>
    </location>
</feature>
<feature type="disulfide bond" description="Interchain (with C-567)" evidence="1">
    <location>
        <position position="817"/>
    </location>
</feature>
<feature type="disulfide bond" description="Interchain (with C-1590)" evidence="1">
    <location>
        <position position="873"/>
    </location>
</feature>
<feature type="disulfide bond" description="Interchain (with C-1566)" evidence="1">
    <location>
        <position position="1389"/>
    </location>
</feature>
<feature type="disulfide bond" evidence="1">
    <location>
        <begin position="1464"/>
        <end position="1528"/>
    </location>
</feature>
<feature type="disulfide bond" description="Interchain (with C-1394)" evidence="1">
    <location>
        <position position="1559"/>
    </location>
</feature>
<feature type="disulfide bond" evidence="1">
    <location>
        <begin position="1576"/>
        <end position="1581"/>
    </location>
</feature>
<feature type="disulfide bond" description="Interchain (with C-876)" evidence="1">
    <location>
        <position position="1583"/>
    </location>
</feature>
<feature type="disulfide bond" evidence="1">
    <location>
        <begin position="1588"/>
        <end position="1666"/>
    </location>
</feature>
<feature type="disulfide bond" evidence="1">
    <location>
        <begin position="1611"/>
        <end position="1735"/>
    </location>
</feature>
<feature type="disulfide bond" evidence="1">
    <location>
        <begin position="1711"/>
        <end position="1720"/>
    </location>
</feature>
<feature type="cross-link" description="Isoglutamyl cysteine thioester (Cys-Gln)" evidence="1">
    <location>
        <begin position="1005"/>
        <end position="1008"/>
    </location>
</feature>
<feature type="sequence conflict" description="In Ref. 4; AA sequence." evidence="9" ref="4">
    <original>T</original>
    <variation>A</variation>
    <location>
        <position position="706"/>
    </location>
</feature>
<feature type="sequence conflict" description="In Ref. 3; AAA91231." evidence="9" ref="3">
    <original>T</original>
    <variation>S</variation>
    <location>
        <position position="1700"/>
    </location>
</feature>
<feature type="sequence conflict" description="In Ref. 3; AAA91231." evidence="9" ref="3">
    <original>R</original>
    <variation>H</variation>
    <location>
        <position position="1709"/>
    </location>
</feature>
<feature type="sequence conflict" description="In Ref. 3; AAA91231." evidence="9" ref="3">
    <original>S</original>
    <variation>R</variation>
    <location>
        <position position="1731"/>
    </location>
</feature>